<proteinExistence type="predicted"/>
<feature type="chain" id="PRO_0000107372" description="Uncharacterized protein MJ1488">
    <location>
        <begin position="1"/>
        <end position="393"/>
    </location>
</feature>
<dbReference type="EMBL" id="L77117">
    <property type="protein sequence ID" value="AAB99500.1"/>
    <property type="molecule type" value="Genomic_DNA"/>
</dbReference>
<dbReference type="PIR" id="G64485">
    <property type="entry name" value="G64485"/>
</dbReference>
<dbReference type="RefSeq" id="WP_010871010.1">
    <property type="nucleotide sequence ID" value="NC_000909.1"/>
</dbReference>
<dbReference type="SMR" id="Q58883"/>
<dbReference type="STRING" id="243232.MJ_1488"/>
<dbReference type="PaxDb" id="243232-MJ_1488"/>
<dbReference type="DNASU" id="1452394"/>
<dbReference type="EnsemblBacteria" id="AAB99500">
    <property type="protein sequence ID" value="AAB99500"/>
    <property type="gene ID" value="MJ_1488"/>
</dbReference>
<dbReference type="GeneID" id="1452394"/>
<dbReference type="KEGG" id="mja:MJ_1488"/>
<dbReference type="eggNOG" id="arCOG01521">
    <property type="taxonomic scope" value="Archaea"/>
</dbReference>
<dbReference type="HOGENOM" id="CLU_668371_0_0_2"/>
<dbReference type="InParanoid" id="Q58883"/>
<dbReference type="OrthoDB" id="11867at2157"/>
<dbReference type="PhylomeDB" id="Q58883"/>
<dbReference type="Proteomes" id="UP000000805">
    <property type="component" value="Chromosome"/>
</dbReference>
<dbReference type="Gene3D" id="3.90.660.50">
    <property type="match status" value="1"/>
</dbReference>
<dbReference type="Gene3D" id="3.50.50.60">
    <property type="entry name" value="FAD/NAD(P)-binding domain"/>
    <property type="match status" value="1"/>
</dbReference>
<dbReference type="InterPro" id="IPR036188">
    <property type="entry name" value="FAD/NAD-bd_sf"/>
</dbReference>
<dbReference type="PANTHER" id="PTHR43734">
    <property type="entry name" value="PHYTOENE DESATURASE"/>
    <property type="match status" value="1"/>
</dbReference>
<dbReference type="PANTHER" id="PTHR43734:SF1">
    <property type="entry name" value="PHYTOENE DESATURASE"/>
    <property type="match status" value="1"/>
</dbReference>
<dbReference type="Pfam" id="PF13450">
    <property type="entry name" value="NAD_binding_8"/>
    <property type="match status" value="1"/>
</dbReference>
<dbReference type="SUPFAM" id="SSF51905">
    <property type="entry name" value="FAD/NAD(P)-binding domain"/>
    <property type="match status" value="1"/>
</dbReference>
<keyword id="KW-1185">Reference proteome</keyword>
<gene>
    <name type="ordered locus">MJ1488</name>
</gene>
<reference key="1">
    <citation type="journal article" date="1996" name="Science">
        <title>Complete genome sequence of the methanogenic archaeon, Methanococcus jannaschii.</title>
        <authorList>
            <person name="Bult C.J."/>
            <person name="White O."/>
            <person name="Olsen G.J."/>
            <person name="Zhou L."/>
            <person name="Fleischmann R.D."/>
            <person name="Sutton G.G."/>
            <person name="Blake J.A."/>
            <person name="FitzGerald L.M."/>
            <person name="Clayton R.A."/>
            <person name="Gocayne J.D."/>
            <person name="Kerlavage A.R."/>
            <person name="Dougherty B.A."/>
            <person name="Tomb J.-F."/>
            <person name="Adams M.D."/>
            <person name="Reich C.I."/>
            <person name="Overbeek R."/>
            <person name="Kirkness E.F."/>
            <person name="Weinstock K.G."/>
            <person name="Merrick J.M."/>
            <person name="Glodek A."/>
            <person name="Scott J.L."/>
            <person name="Geoghagen N.S.M."/>
            <person name="Weidman J.F."/>
            <person name="Fuhrmann J.L."/>
            <person name="Nguyen D."/>
            <person name="Utterback T.R."/>
            <person name="Kelley J.M."/>
            <person name="Peterson J.D."/>
            <person name="Sadow P.W."/>
            <person name="Hanna M.C."/>
            <person name="Cotton M.D."/>
            <person name="Roberts K.M."/>
            <person name="Hurst M.A."/>
            <person name="Kaine B.P."/>
            <person name="Borodovsky M."/>
            <person name="Klenk H.-P."/>
            <person name="Fraser C.M."/>
            <person name="Smith H.O."/>
            <person name="Woese C.R."/>
            <person name="Venter J.C."/>
        </authorList>
    </citation>
    <scope>NUCLEOTIDE SEQUENCE [LARGE SCALE GENOMIC DNA]</scope>
    <source>
        <strain>ATCC 43067 / DSM 2661 / JAL-1 / JCM 10045 / NBRC 100440</strain>
    </source>
</reference>
<sequence>MRIGIVGAGLGGLLAGALLSKNHEVVVFEKLPFLGGRFTNLKYEGFQLTTGALHMIPHGNDGYLAQALRKAGANVKIINSKPDGTFLINGKEYLYKELFSLLGFKEKAKAFKLATKLKLGKVDKNISFGEFLEEIDLALKVGNAFTGWALSLTAYETPMSEIIEIAKNYHKFGGPGIPIGGCKAVTDELSRIIKKNNGKIIKEYEVKRIEIDEKAYIDDYEFDVVISNISPIETQKICNIKFLKSKPKPSKGIKISIATKEGIIKHGGVLFTPECERINGLNQVTNVDKSLAPEGWHLVMTHQTQLTNNVKKEIDLGLEDIENLFKGKDYKILHIQSYRDDWPVNHASNGTDIDNIVNDRFYLVGDGAKGRGGIEVEGIAMGVLKVVNYINSL</sequence>
<organism>
    <name type="scientific">Methanocaldococcus jannaschii (strain ATCC 43067 / DSM 2661 / JAL-1 / JCM 10045 / NBRC 100440)</name>
    <name type="common">Methanococcus jannaschii</name>
    <dbReference type="NCBI Taxonomy" id="243232"/>
    <lineage>
        <taxon>Archaea</taxon>
        <taxon>Methanobacteriati</taxon>
        <taxon>Methanobacteriota</taxon>
        <taxon>Methanomada group</taxon>
        <taxon>Methanococci</taxon>
        <taxon>Methanococcales</taxon>
        <taxon>Methanocaldococcaceae</taxon>
        <taxon>Methanocaldococcus</taxon>
    </lineage>
</organism>
<protein>
    <recommendedName>
        <fullName>Uncharacterized protein MJ1488</fullName>
    </recommendedName>
</protein>
<name>Y1488_METJA</name>
<accession>Q58883</accession>